<proteinExistence type="inferred from homology"/>
<reference key="1">
    <citation type="submission" date="2007-07" db="EMBL/GenBank/DDBJ databases">
        <title>Complete genome sequence of Campylobacter jejuni subsp doylei 269.97 isolated from human blood.</title>
        <authorList>
            <person name="Fouts D.E."/>
            <person name="Mongodin E.F."/>
            <person name="Puiu D."/>
            <person name="Sebastian Y."/>
            <person name="Miller W.G."/>
            <person name="Mandrell R.E."/>
            <person name="Lastovica A.J."/>
            <person name="Nelson K.E."/>
        </authorList>
    </citation>
    <scope>NUCLEOTIDE SEQUENCE [LARGE SCALE GENOMIC DNA]</scope>
    <source>
        <strain>ATCC BAA-1458 / RM4099 / 269.97</strain>
    </source>
</reference>
<comment type="function">
    <text evidence="1">Binds the lower part of the 30S subunit head. Binds mRNA in the 70S ribosome, positioning it for translation.</text>
</comment>
<comment type="subunit">
    <text evidence="1">Part of the 30S ribosomal subunit. Forms a tight complex with proteins S10 and S14.</text>
</comment>
<comment type="similarity">
    <text evidence="1">Belongs to the universal ribosomal protein uS3 family.</text>
</comment>
<protein>
    <recommendedName>
        <fullName evidence="1">Small ribosomal subunit protein uS3</fullName>
    </recommendedName>
    <alternativeName>
        <fullName evidence="3">30S ribosomal protein S3</fullName>
    </alternativeName>
</protein>
<dbReference type="EMBL" id="CP000768">
    <property type="protein sequence ID" value="ABS44659.1"/>
    <property type="molecule type" value="Genomic_DNA"/>
</dbReference>
<dbReference type="SMR" id="A7H650"/>
<dbReference type="KEGG" id="cjd:JJD26997_2075"/>
<dbReference type="HOGENOM" id="CLU_058591_0_2_7"/>
<dbReference type="Proteomes" id="UP000002302">
    <property type="component" value="Chromosome"/>
</dbReference>
<dbReference type="GO" id="GO:0022627">
    <property type="term" value="C:cytosolic small ribosomal subunit"/>
    <property type="evidence" value="ECO:0007669"/>
    <property type="project" value="TreeGrafter"/>
</dbReference>
<dbReference type="GO" id="GO:0003729">
    <property type="term" value="F:mRNA binding"/>
    <property type="evidence" value="ECO:0007669"/>
    <property type="project" value="UniProtKB-UniRule"/>
</dbReference>
<dbReference type="GO" id="GO:0019843">
    <property type="term" value="F:rRNA binding"/>
    <property type="evidence" value="ECO:0007669"/>
    <property type="project" value="UniProtKB-UniRule"/>
</dbReference>
<dbReference type="GO" id="GO:0003735">
    <property type="term" value="F:structural constituent of ribosome"/>
    <property type="evidence" value="ECO:0007669"/>
    <property type="project" value="InterPro"/>
</dbReference>
<dbReference type="GO" id="GO:0006412">
    <property type="term" value="P:translation"/>
    <property type="evidence" value="ECO:0007669"/>
    <property type="project" value="UniProtKB-UniRule"/>
</dbReference>
<dbReference type="CDD" id="cd02412">
    <property type="entry name" value="KH-II_30S_S3"/>
    <property type="match status" value="1"/>
</dbReference>
<dbReference type="FunFam" id="3.30.1140.32:FF:000006">
    <property type="entry name" value="30S ribosomal protein S3"/>
    <property type="match status" value="1"/>
</dbReference>
<dbReference type="FunFam" id="3.30.300.20:FF:000001">
    <property type="entry name" value="30S ribosomal protein S3"/>
    <property type="match status" value="1"/>
</dbReference>
<dbReference type="Gene3D" id="3.30.300.20">
    <property type="match status" value="1"/>
</dbReference>
<dbReference type="Gene3D" id="3.30.1140.32">
    <property type="entry name" value="Ribosomal protein S3, C-terminal domain"/>
    <property type="match status" value="1"/>
</dbReference>
<dbReference type="HAMAP" id="MF_01309_B">
    <property type="entry name" value="Ribosomal_uS3_B"/>
    <property type="match status" value="1"/>
</dbReference>
<dbReference type="InterPro" id="IPR004087">
    <property type="entry name" value="KH_dom"/>
</dbReference>
<dbReference type="InterPro" id="IPR015946">
    <property type="entry name" value="KH_dom-like_a/b"/>
</dbReference>
<dbReference type="InterPro" id="IPR004044">
    <property type="entry name" value="KH_dom_type_2"/>
</dbReference>
<dbReference type="InterPro" id="IPR009019">
    <property type="entry name" value="KH_sf_prok-type"/>
</dbReference>
<dbReference type="InterPro" id="IPR036419">
    <property type="entry name" value="Ribosomal_S3_C_sf"/>
</dbReference>
<dbReference type="InterPro" id="IPR005704">
    <property type="entry name" value="Ribosomal_uS3_bac-typ"/>
</dbReference>
<dbReference type="InterPro" id="IPR001351">
    <property type="entry name" value="Ribosomal_uS3_C"/>
</dbReference>
<dbReference type="InterPro" id="IPR018280">
    <property type="entry name" value="Ribosomal_uS3_CS"/>
</dbReference>
<dbReference type="NCBIfam" id="TIGR01009">
    <property type="entry name" value="rpsC_bact"/>
    <property type="match status" value="1"/>
</dbReference>
<dbReference type="PANTHER" id="PTHR11760">
    <property type="entry name" value="30S/40S RIBOSOMAL PROTEIN S3"/>
    <property type="match status" value="1"/>
</dbReference>
<dbReference type="PANTHER" id="PTHR11760:SF19">
    <property type="entry name" value="SMALL RIBOSOMAL SUBUNIT PROTEIN US3C"/>
    <property type="match status" value="1"/>
</dbReference>
<dbReference type="Pfam" id="PF07650">
    <property type="entry name" value="KH_2"/>
    <property type="match status" value="1"/>
</dbReference>
<dbReference type="Pfam" id="PF00189">
    <property type="entry name" value="Ribosomal_S3_C"/>
    <property type="match status" value="1"/>
</dbReference>
<dbReference type="SMART" id="SM00322">
    <property type="entry name" value="KH"/>
    <property type="match status" value="1"/>
</dbReference>
<dbReference type="SUPFAM" id="SSF54814">
    <property type="entry name" value="Prokaryotic type KH domain (KH-domain type II)"/>
    <property type="match status" value="1"/>
</dbReference>
<dbReference type="SUPFAM" id="SSF54821">
    <property type="entry name" value="Ribosomal protein S3 C-terminal domain"/>
    <property type="match status" value="1"/>
</dbReference>
<dbReference type="PROSITE" id="PS50823">
    <property type="entry name" value="KH_TYPE_2"/>
    <property type="match status" value="1"/>
</dbReference>
<dbReference type="PROSITE" id="PS00548">
    <property type="entry name" value="RIBOSOMAL_S3"/>
    <property type="match status" value="1"/>
</dbReference>
<accession>A7H650</accession>
<gene>
    <name evidence="1" type="primary">rpsC</name>
    <name type="ordered locus">JJD26997_2075</name>
</gene>
<feature type="chain" id="PRO_0000323292" description="Small ribosomal subunit protein uS3">
    <location>
        <begin position="1"/>
        <end position="233"/>
    </location>
</feature>
<feature type="domain" description="KH type-2" evidence="1">
    <location>
        <begin position="39"/>
        <end position="107"/>
    </location>
</feature>
<feature type="region of interest" description="Disordered" evidence="2">
    <location>
        <begin position="212"/>
        <end position="233"/>
    </location>
</feature>
<feature type="compositionally biased region" description="Basic and acidic residues" evidence="2">
    <location>
        <begin position="212"/>
        <end position="222"/>
    </location>
</feature>
<feature type="compositionally biased region" description="Basic residues" evidence="2">
    <location>
        <begin position="224"/>
        <end position="233"/>
    </location>
</feature>
<keyword id="KW-0687">Ribonucleoprotein</keyword>
<keyword id="KW-0689">Ribosomal protein</keyword>
<keyword id="KW-0694">RNA-binding</keyword>
<keyword id="KW-0699">rRNA-binding</keyword>
<name>RS3_CAMJD</name>
<organism>
    <name type="scientific">Campylobacter jejuni subsp. doylei (strain ATCC BAA-1458 / RM4099 / 269.97)</name>
    <dbReference type="NCBI Taxonomy" id="360109"/>
    <lineage>
        <taxon>Bacteria</taxon>
        <taxon>Pseudomonadati</taxon>
        <taxon>Campylobacterota</taxon>
        <taxon>Epsilonproteobacteria</taxon>
        <taxon>Campylobacterales</taxon>
        <taxon>Campylobacteraceae</taxon>
        <taxon>Campylobacter</taxon>
    </lineage>
</organism>
<sequence>MGQKVNPIGLRLGINRNWESRWFPTKANLVENIGEDYKIRAFLKRKLYYAGISQILVERTAKKLRVTVVAARPGIIIGKKGSDVDNLRKELQDLISKDVNINIKEERKAGASAQLAAESVATQLEKRIAFRRAMKKVIQGAQKAGAKGIKVSVSGRLGGAEMARTEWYLEGRVPLHTLRAKIDYGFAEARTTYGNIGVKVWIFKGEVLHKGMQPEKTEESAPAKKSRRTRRGK</sequence>
<evidence type="ECO:0000255" key="1">
    <source>
        <dbReference type="HAMAP-Rule" id="MF_01309"/>
    </source>
</evidence>
<evidence type="ECO:0000256" key="2">
    <source>
        <dbReference type="SAM" id="MobiDB-lite"/>
    </source>
</evidence>
<evidence type="ECO:0000305" key="3"/>